<organism>
    <name type="scientific">Methanococcoides burtonii (strain DSM 6242 / NBRC 107633 / OCM 468 / ACE-M)</name>
    <dbReference type="NCBI Taxonomy" id="259564"/>
    <lineage>
        <taxon>Archaea</taxon>
        <taxon>Methanobacteriati</taxon>
        <taxon>Methanobacteriota</taxon>
        <taxon>Stenosarchaea group</taxon>
        <taxon>Methanomicrobia</taxon>
        <taxon>Methanosarcinales</taxon>
        <taxon>Methanosarcinaceae</taxon>
        <taxon>Methanococcoides</taxon>
    </lineage>
</organism>
<comment type="function">
    <text evidence="1">Catalyzes the GTP-dependent ribosomal translocation step during translation elongation. During this step, the ribosome changes from the pre-translocational (PRE) to the post-translocational (POST) state as the newly formed A-site-bound peptidyl-tRNA and P-site-bound deacylated tRNA move to the P and E sites, respectively. Catalyzes the coordinated movement of the two tRNA molecules, the mRNA and conformational changes in the ribosome (By similarity).</text>
</comment>
<comment type="subcellular location">
    <subcellularLocation>
        <location evidence="1">Cytoplasm</location>
    </subcellularLocation>
</comment>
<comment type="similarity">
    <text evidence="2">Belongs to the TRAFAC class translation factor GTPase superfamily. Classic translation factor GTPase family. EF-G/EF-2 subfamily.</text>
</comment>
<protein>
    <recommendedName>
        <fullName>Elongation factor 2</fullName>
        <shortName>EF-2</shortName>
    </recommendedName>
</protein>
<keyword id="KW-0963">Cytoplasm</keyword>
<keyword id="KW-0251">Elongation factor</keyword>
<keyword id="KW-0342">GTP-binding</keyword>
<keyword id="KW-0547">Nucleotide-binding</keyword>
<keyword id="KW-0648">Protein biosynthesis</keyword>
<dbReference type="EMBL" id="AF003869">
    <property type="protein sequence ID" value="AAC79155.1"/>
    <property type="molecule type" value="Genomic_DNA"/>
</dbReference>
<dbReference type="EMBL" id="CP000300">
    <property type="protein sequence ID" value="ABE52094.1"/>
    <property type="molecule type" value="Genomic_DNA"/>
</dbReference>
<dbReference type="PIR" id="T43943">
    <property type="entry name" value="T43943"/>
</dbReference>
<dbReference type="RefSeq" id="WP_011499240.1">
    <property type="nucleotide sequence ID" value="NC_007955.1"/>
</dbReference>
<dbReference type="SMR" id="O93632"/>
<dbReference type="STRING" id="259564.Mbur_1171"/>
<dbReference type="GeneID" id="3998458"/>
<dbReference type="KEGG" id="mbu:Mbur_1171"/>
<dbReference type="HOGENOM" id="CLU_002794_11_1_2"/>
<dbReference type="OrthoDB" id="6290at2157"/>
<dbReference type="Proteomes" id="UP000001979">
    <property type="component" value="Chromosome"/>
</dbReference>
<dbReference type="GO" id="GO:0005829">
    <property type="term" value="C:cytosol"/>
    <property type="evidence" value="ECO:0007669"/>
    <property type="project" value="TreeGrafter"/>
</dbReference>
<dbReference type="GO" id="GO:1990904">
    <property type="term" value="C:ribonucleoprotein complex"/>
    <property type="evidence" value="ECO:0007669"/>
    <property type="project" value="TreeGrafter"/>
</dbReference>
<dbReference type="GO" id="GO:0005525">
    <property type="term" value="F:GTP binding"/>
    <property type="evidence" value="ECO:0007669"/>
    <property type="project" value="UniProtKB-UniRule"/>
</dbReference>
<dbReference type="GO" id="GO:0003924">
    <property type="term" value="F:GTPase activity"/>
    <property type="evidence" value="ECO:0007669"/>
    <property type="project" value="InterPro"/>
</dbReference>
<dbReference type="GO" id="GO:0003746">
    <property type="term" value="F:translation elongation factor activity"/>
    <property type="evidence" value="ECO:0007669"/>
    <property type="project" value="UniProtKB-UniRule"/>
</dbReference>
<dbReference type="CDD" id="cd01681">
    <property type="entry name" value="aeEF2_snRNP_like_IV"/>
    <property type="match status" value="1"/>
</dbReference>
<dbReference type="CDD" id="cd01885">
    <property type="entry name" value="EF2"/>
    <property type="match status" value="1"/>
</dbReference>
<dbReference type="CDD" id="cd16268">
    <property type="entry name" value="EF2_II"/>
    <property type="match status" value="1"/>
</dbReference>
<dbReference type="CDD" id="cd16261">
    <property type="entry name" value="EF2_snRNP_III"/>
    <property type="match status" value="1"/>
</dbReference>
<dbReference type="CDD" id="cd01514">
    <property type="entry name" value="Elongation_Factor_C"/>
    <property type="match status" value="1"/>
</dbReference>
<dbReference type="FunFam" id="2.40.30.10:FF:000110">
    <property type="entry name" value="Elongation factor 2"/>
    <property type="match status" value="1"/>
</dbReference>
<dbReference type="FunFam" id="3.30.70.240:FF:000010">
    <property type="entry name" value="Elongation factor 2"/>
    <property type="match status" value="1"/>
</dbReference>
<dbReference type="FunFam" id="3.40.50.300:FF:000684">
    <property type="entry name" value="Elongation factor 2"/>
    <property type="match status" value="1"/>
</dbReference>
<dbReference type="FunFam" id="3.30.70.870:FF:000002">
    <property type="entry name" value="Translation elongation factor 2"/>
    <property type="match status" value="1"/>
</dbReference>
<dbReference type="Gene3D" id="3.30.230.10">
    <property type="match status" value="1"/>
</dbReference>
<dbReference type="Gene3D" id="3.30.70.240">
    <property type="match status" value="1"/>
</dbReference>
<dbReference type="Gene3D" id="3.30.70.870">
    <property type="entry name" value="Elongation Factor G (Translational Gtpase), domain 3"/>
    <property type="match status" value="1"/>
</dbReference>
<dbReference type="Gene3D" id="3.40.50.300">
    <property type="entry name" value="P-loop containing nucleotide triphosphate hydrolases"/>
    <property type="match status" value="1"/>
</dbReference>
<dbReference type="Gene3D" id="2.40.30.10">
    <property type="entry name" value="Translation factors"/>
    <property type="match status" value="1"/>
</dbReference>
<dbReference type="HAMAP" id="MF_00054_A">
    <property type="entry name" value="EF_G_EF_2_A"/>
    <property type="match status" value="1"/>
</dbReference>
<dbReference type="InterPro" id="IPR041095">
    <property type="entry name" value="EFG_II"/>
</dbReference>
<dbReference type="InterPro" id="IPR035647">
    <property type="entry name" value="EFG_III/V"/>
</dbReference>
<dbReference type="InterPro" id="IPR000640">
    <property type="entry name" value="EFG_V-like"/>
</dbReference>
<dbReference type="InterPro" id="IPR004161">
    <property type="entry name" value="EFTu-like_2"/>
</dbReference>
<dbReference type="InterPro" id="IPR031157">
    <property type="entry name" value="G_TR_CS"/>
</dbReference>
<dbReference type="InterPro" id="IPR027417">
    <property type="entry name" value="P-loop_NTPase"/>
</dbReference>
<dbReference type="InterPro" id="IPR020568">
    <property type="entry name" value="Ribosomal_Su5_D2-typ_SF"/>
</dbReference>
<dbReference type="InterPro" id="IPR014721">
    <property type="entry name" value="Ribsml_uS5_D2-typ_fold_subgr"/>
</dbReference>
<dbReference type="InterPro" id="IPR005225">
    <property type="entry name" value="Small_GTP-bd"/>
</dbReference>
<dbReference type="InterPro" id="IPR000795">
    <property type="entry name" value="T_Tr_GTP-bd_dom"/>
</dbReference>
<dbReference type="InterPro" id="IPR009000">
    <property type="entry name" value="Transl_B-barrel_sf"/>
</dbReference>
<dbReference type="InterPro" id="IPR004543">
    <property type="entry name" value="Transl_elong_EFG/EF2_arc"/>
</dbReference>
<dbReference type="InterPro" id="IPR005517">
    <property type="entry name" value="Transl_elong_EFG/EF2_IV"/>
</dbReference>
<dbReference type="NCBIfam" id="TIGR00490">
    <property type="entry name" value="aEF-2"/>
    <property type="match status" value="1"/>
</dbReference>
<dbReference type="NCBIfam" id="TIGR00231">
    <property type="entry name" value="small_GTP"/>
    <property type="match status" value="1"/>
</dbReference>
<dbReference type="PANTHER" id="PTHR42908:SF3">
    <property type="entry name" value="ELONGATION FACTOR-LIKE GTPASE 1"/>
    <property type="match status" value="1"/>
</dbReference>
<dbReference type="PANTHER" id="PTHR42908">
    <property type="entry name" value="TRANSLATION ELONGATION FACTOR-RELATED"/>
    <property type="match status" value="1"/>
</dbReference>
<dbReference type="Pfam" id="PF00679">
    <property type="entry name" value="EFG_C"/>
    <property type="match status" value="1"/>
</dbReference>
<dbReference type="Pfam" id="PF14492">
    <property type="entry name" value="EFG_III"/>
    <property type="match status" value="1"/>
</dbReference>
<dbReference type="Pfam" id="PF03764">
    <property type="entry name" value="EFG_IV"/>
    <property type="match status" value="1"/>
</dbReference>
<dbReference type="Pfam" id="PF00009">
    <property type="entry name" value="GTP_EFTU"/>
    <property type="match status" value="1"/>
</dbReference>
<dbReference type="Pfam" id="PF03144">
    <property type="entry name" value="GTP_EFTU_D2"/>
    <property type="match status" value="1"/>
</dbReference>
<dbReference type="PRINTS" id="PR00315">
    <property type="entry name" value="ELONGATNFCT"/>
</dbReference>
<dbReference type="SMART" id="SM00838">
    <property type="entry name" value="EFG_C"/>
    <property type="match status" value="1"/>
</dbReference>
<dbReference type="SMART" id="SM00889">
    <property type="entry name" value="EFG_IV"/>
    <property type="match status" value="1"/>
</dbReference>
<dbReference type="SUPFAM" id="SSF54980">
    <property type="entry name" value="EF-G C-terminal domain-like"/>
    <property type="match status" value="2"/>
</dbReference>
<dbReference type="SUPFAM" id="SSF52540">
    <property type="entry name" value="P-loop containing nucleoside triphosphate hydrolases"/>
    <property type="match status" value="1"/>
</dbReference>
<dbReference type="SUPFAM" id="SSF54211">
    <property type="entry name" value="Ribosomal protein S5 domain 2-like"/>
    <property type="match status" value="1"/>
</dbReference>
<dbReference type="SUPFAM" id="SSF50447">
    <property type="entry name" value="Translation proteins"/>
    <property type="match status" value="1"/>
</dbReference>
<dbReference type="PROSITE" id="PS00301">
    <property type="entry name" value="G_TR_1"/>
    <property type="match status" value="1"/>
</dbReference>
<dbReference type="PROSITE" id="PS51722">
    <property type="entry name" value="G_TR_2"/>
    <property type="match status" value="1"/>
</dbReference>
<name>EF2_METBU</name>
<evidence type="ECO:0000250" key="1"/>
<evidence type="ECO:0000305" key="2"/>
<reference key="1">
    <citation type="journal article" date="1998" name="FEBS Lett.">
        <title>Archaeal cold-adapted proteins: structural and evolutionary analysis of the elongation factor 2 proteins from psychrophilic, mesophilic and thermophilic methanogens.</title>
        <authorList>
            <person name="Thomas T."/>
            <person name="Cavicchioli R."/>
        </authorList>
    </citation>
    <scope>NUCLEOTIDE SEQUENCE [GENOMIC DNA]</scope>
</reference>
<reference key="2">
    <citation type="journal article" date="2009" name="ISME J.">
        <title>The genome sequence of the psychrophilic archaeon, Methanococcoides burtonii: the role of genome evolution in cold adaptation.</title>
        <authorList>
            <person name="Allen M.A."/>
            <person name="Lauro F.M."/>
            <person name="Williams T.J."/>
            <person name="Burg D."/>
            <person name="Siddiqui K.S."/>
            <person name="De Francisci D."/>
            <person name="Chong K.W."/>
            <person name="Pilak O."/>
            <person name="Chew H.H."/>
            <person name="De Maere M.Z."/>
            <person name="Ting L."/>
            <person name="Katrib M."/>
            <person name="Ng C."/>
            <person name="Sowers K.R."/>
            <person name="Galperin M.Y."/>
            <person name="Anderson I.J."/>
            <person name="Ivanova N."/>
            <person name="Dalin E."/>
            <person name="Martinez M."/>
            <person name="Lapidus A."/>
            <person name="Hauser L."/>
            <person name="Land M."/>
            <person name="Thomas T."/>
            <person name="Cavicchioli R."/>
        </authorList>
    </citation>
    <scope>NUCLEOTIDE SEQUENCE [LARGE SCALE GENOMIC DNA]</scope>
    <source>
        <strain>DSM 6242 / NBRC 107633 / OCM 468 / ACE-M</strain>
    </source>
</reference>
<accession>O93632</accession>
<accession>Q12WT2</accession>
<sequence length="730" mass="80478">MGRRKKMVERVTALMSNPLMIRNIGIVAHIDHGKTTLSDNLLAGAGMISKELAGRQLFMDSDAEEQERGITIDSSNVSMVHEYEGKEYLINLIDTPGHVDFGGDVTRAMRAVDGAVVVIDAVEGTMPQTETVLRQALKEHVKPVLFINKVDRLINELQVDDQEMQIRLGKLIDHVNKLIKGMNEERYNAGWRVDAAEGTVAFGSALYNWAISVPMMKKTGVSFSEVFNYCREEDMKSLAEKCPLHEAVNDMVIRFLPSPIDAQKGRVGAIWHGDHESGIGKQMSVADAKGDVAFMVTDISMDPHAGEVSTGRLFSGSLSRGMEVYVSGASKTNRIQQVGVFMGPERLEVDAIPAGNIAAVTGLRDAFVGATVTTLEGMEPFESIKHASEPVVTVAVEAKHMKDLPKLVEVLRQVAKEDPTLKITLDEETGEHLMAGMGELHLEVIAHRIERDKGVEITTTPPLVVYRETITGTAGPVEGKSPNRHNRFYVIVEPLEPEVRELIRNDEISMRMPEVERREKLMAAGLNKDEAKKIVNIFESNAYFDMTKGIQYLNETMELIIEGFTEVMKAGPLSKEPCMGVKVKLMDAKLHEDAVHRGPAQVIPASRQAIQAAMLMADDTLFEPYQKVFIQVPQEQMGGATKEIQGRRGVIIDMTSEGDTTVIESKAPVSELFGFAGDIRSATEGRAMWSTEFAGFEPLPMSLMTEVVTGIRKRKGLKAALPQAEDFMSM</sequence>
<feature type="chain" id="PRO_0000091031" description="Elongation factor 2">
    <location>
        <begin position="1"/>
        <end position="730"/>
    </location>
</feature>
<feature type="domain" description="tr-type G">
    <location>
        <begin position="19"/>
        <end position="229"/>
    </location>
</feature>
<feature type="binding site" evidence="1">
    <location>
        <begin position="28"/>
        <end position="35"/>
    </location>
    <ligand>
        <name>GTP</name>
        <dbReference type="ChEBI" id="CHEBI:37565"/>
    </ligand>
</feature>
<feature type="binding site" evidence="1">
    <location>
        <begin position="94"/>
        <end position="98"/>
    </location>
    <ligand>
        <name>GTP</name>
        <dbReference type="ChEBI" id="CHEBI:37565"/>
    </ligand>
</feature>
<feature type="binding site" evidence="1">
    <location>
        <begin position="148"/>
        <end position="151"/>
    </location>
    <ligand>
        <name>GTP</name>
        <dbReference type="ChEBI" id="CHEBI:37565"/>
    </ligand>
</feature>
<feature type="modified residue" description="Diphthamide" evidence="1">
    <location>
        <position position="596"/>
    </location>
</feature>
<proteinExistence type="inferred from homology"/>
<gene>
    <name type="primary">fusA</name>
    <name type="synonym">fus</name>
    <name type="ordered locus">Mbur_1171</name>
</gene>